<organism>
    <name type="scientific">Rattus norvegicus</name>
    <name type="common">Rat</name>
    <dbReference type="NCBI Taxonomy" id="10116"/>
    <lineage>
        <taxon>Eukaryota</taxon>
        <taxon>Metazoa</taxon>
        <taxon>Chordata</taxon>
        <taxon>Craniata</taxon>
        <taxon>Vertebrata</taxon>
        <taxon>Euteleostomi</taxon>
        <taxon>Mammalia</taxon>
        <taxon>Eutheria</taxon>
        <taxon>Euarchontoglires</taxon>
        <taxon>Glires</taxon>
        <taxon>Rodentia</taxon>
        <taxon>Myomorpha</taxon>
        <taxon>Muroidea</taxon>
        <taxon>Muridae</taxon>
        <taxon>Murinae</taxon>
        <taxon>Rattus</taxon>
    </lineage>
</organism>
<accession>Q3C2P8</accession>
<sequence>MTEETHPDDDSYIVRVKAVVMTRDDSSGGWFPQEGGGISRVGVCKVMHPEGNGRSGFLIHGERQKDKLVVLECYVRKDLVYTKANPTFHHWKVDNRKFGLTFQSPADARAFDRGVRKAIEDLIEGSTTSSSTIHNEAELGDDDVFTTATDSSSNSSQKREPNTRTISSPTSCEHRRIYTLDPYPMDLYHPDQRLPRSYPQVTFPEDDEEIVRINPREKIWMTGYEDYRHAPVRGKYLDSTEDADSYVRFAKGEVPKHEYTYPYVDSSDFGFGEDPKGNVIKTQPPRAKSRRRKENGERSRCVYCRDMFNHEENRRGHCQDAPDAVRTCIRRVSCMWCADSMLYHCMSDPEGDYTDPCSCDTSDEKFCLRWMALIALSFLAPCMCCYLPLRACHHCGVMCRCCGGKHKAAA</sequence>
<feature type="chain" id="PRO_0000354679" description="Sprouty-related, EVH1 domain-containing protein 2">
    <location>
        <begin position="1"/>
        <end position="410"/>
    </location>
</feature>
<feature type="domain" description="WH1" evidence="3">
    <location>
        <begin position="5"/>
        <end position="122"/>
    </location>
</feature>
<feature type="domain" description="KBD" evidence="5">
    <location>
        <begin position="197"/>
        <end position="252"/>
    </location>
</feature>
<feature type="domain" description="SPR" evidence="4">
    <location>
        <begin position="300"/>
        <end position="408"/>
    </location>
</feature>
<feature type="region of interest" description="Disordered" evidence="6">
    <location>
        <begin position="127"/>
        <end position="171"/>
    </location>
</feature>
<feature type="region of interest" description="Disordered" evidence="6">
    <location>
        <begin position="274"/>
        <end position="294"/>
    </location>
</feature>
<feature type="compositionally biased region" description="Polar residues" evidence="6">
    <location>
        <begin position="146"/>
        <end position="156"/>
    </location>
</feature>
<feature type="modified residue" description="Phosphotyrosine" evidence="1">
    <location>
        <position position="224"/>
    </location>
</feature>
<feature type="modified residue" description="Phosphotyrosine" evidence="1">
    <location>
        <position position="227"/>
    </location>
</feature>
<evidence type="ECO:0000250" key="1">
    <source>
        <dbReference type="UniProtKB" id="Q7Z698"/>
    </source>
</evidence>
<evidence type="ECO:0000250" key="2">
    <source>
        <dbReference type="UniProtKB" id="Q924S7"/>
    </source>
</evidence>
<evidence type="ECO:0000255" key="3">
    <source>
        <dbReference type="PROSITE-ProRule" id="PRU00410"/>
    </source>
</evidence>
<evidence type="ECO:0000255" key="4">
    <source>
        <dbReference type="PROSITE-ProRule" id="PRU00572"/>
    </source>
</evidence>
<evidence type="ECO:0000255" key="5">
    <source>
        <dbReference type="PROSITE-ProRule" id="PRU00821"/>
    </source>
</evidence>
<evidence type="ECO:0000256" key="6">
    <source>
        <dbReference type="SAM" id="MobiDB-lite"/>
    </source>
</evidence>
<evidence type="ECO:0000269" key="7">
    <source>
    </source>
</evidence>
<evidence type="ECO:0000269" key="8">
    <source>
    </source>
</evidence>
<reference key="1">
    <citation type="submission" date="2003-10" db="EMBL/GenBank/DDBJ databases">
        <title>Identification of cDNA encoding rat Spred-2.</title>
        <authorList>
            <person name="Saitoh A."/>
            <person name="Hirasawa N."/>
            <person name="Ohuchi K."/>
        </authorList>
    </citation>
    <scope>NUCLEOTIDE SEQUENCE [MRNA]</scope>
</reference>
<reference key="2">
    <citation type="journal article" date="2008" name="J. Biol. Chem.">
        <title>Tesk1 interacts with Spry2 to abrogate its inhibition of ERK phosphorylation downstream of receptor tyrosine kinase signaling.</title>
        <authorList>
            <person name="Chandramouli S."/>
            <person name="Yu C.Y."/>
            <person name="Yusoff P."/>
            <person name="Lao D.H."/>
            <person name="Leong H.F."/>
            <person name="Mizuno K."/>
            <person name="Guy G.R."/>
        </authorList>
    </citation>
    <scope>INTERACTION WITH TESK1</scope>
</reference>
<reference key="3">
    <citation type="journal article" date="2015" name="Exp. Eye Res.">
        <title>Negative regulation of TGFbeta-induced lens epithelial to mesenchymal transition (EMT) by RTK antagonists.</title>
        <authorList>
            <person name="Zhao G."/>
            <person name="Wojciechowski M.C."/>
            <person name="Jee S."/>
            <person name="Boros J."/>
            <person name="McAvoy J.W."/>
            <person name="Lovicu F.J."/>
        </authorList>
    </citation>
    <scope>TISSUE SPECIFICITY</scope>
</reference>
<gene>
    <name type="primary">Spred2</name>
</gene>
<protein>
    <recommendedName>
        <fullName>Sprouty-related, EVH1 domain-containing protein 2</fullName>
        <shortName>Spred-2</shortName>
    </recommendedName>
</protein>
<dbReference type="EMBL" id="AB125136">
    <property type="protein sequence ID" value="BAE46587.1"/>
    <property type="molecule type" value="mRNA"/>
</dbReference>
<dbReference type="RefSeq" id="NP_001040559.1">
    <property type="nucleotide sequence ID" value="NM_001047094.3"/>
</dbReference>
<dbReference type="BMRB" id="Q3C2P8"/>
<dbReference type="SMR" id="Q3C2P8"/>
<dbReference type="FunCoup" id="Q3C2P8">
    <property type="interactions" value="2941"/>
</dbReference>
<dbReference type="STRING" id="10116.ENSRNOP00000071793"/>
<dbReference type="iPTMnet" id="Q3C2P8"/>
<dbReference type="PhosphoSitePlus" id="Q3C2P8"/>
<dbReference type="SwissPalm" id="Q3C2P8"/>
<dbReference type="PaxDb" id="10116-ENSRNOP00000006573"/>
<dbReference type="Ensembl" id="ENSRNOT00000079874.2">
    <property type="protein sequence ID" value="ENSRNOP00000071793.2"/>
    <property type="gene ID" value="ENSRNOG00000004888.8"/>
</dbReference>
<dbReference type="GeneID" id="305539"/>
<dbReference type="KEGG" id="rno:305539"/>
<dbReference type="UCSC" id="RGD:1309304">
    <property type="organism name" value="rat"/>
</dbReference>
<dbReference type="AGR" id="RGD:1309304"/>
<dbReference type="CTD" id="200734"/>
<dbReference type="RGD" id="1309304">
    <property type="gene designation" value="Spred2"/>
</dbReference>
<dbReference type="eggNOG" id="KOG4590">
    <property type="taxonomic scope" value="Eukaryota"/>
</dbReference>
<dbReference type="GeneTree" id="ENSGT00940000156841"/>
<dbReference type="HOGENOM" id="CLU_038867_1_1_1"/>
<dbReference type="InParanoid" id="Q3C2P8"/>
<dbReference type="OMA" id="FEHHRIC"/>
<dbReference type="OrthoDB" id="5786858at2759"/>
<dbReference type="Reactome" id="R-RNO-5658442">
    <property type="pathway name" value="Regulation of RAS by GAPs"/>
</dbReference>
<dbReference type="Reactome" id="R-RNO-5658623">
    <property type="pathway name" value="FGFRL1 modulation of FGFR1 signaling"/>
</dbReference>
<dbReference type="PRO" id="PR:Q3C2P8"/>
<dbReference type="Proteomes" id="UP000002494">
    <property type="component" value="Chromosome 14"/>
</dbReference>
<dbReference type="Bgee" id="ENSRNOG00000004888">
    <property type="expression patterns" value="Expressed in frontal cortex and 18 other cell types or tissues"/>
</dbReference>
<dbReference type="ExpressionAtlas" id="Q3C2P8">
    <property type="expression patterns" value="baseline and differential"/>
</dbReference>
<dbReference type="GO" id="GO:0031410">
    <property type="term" value="C:cytoplasmic vesicle"/>
    <property type="evidence" value="ECO:0000266"/>
    <property type="project" value="RGD"/>
</dbReference>
<dbReference type="GO" id="GO:0005886">
    <property type="term" value="C:plasma membrane"/>
    <property type="evidence" value="ECO:0000266"/>
    <property type="project" value="RGD"/>
</dbReference>
<dbReference type="GO" id="GO:0030658">
    <property type="term" value="C:transport vesicle membrane"/>
    <property type="evidence" value="ECO:0007669"/>
    <property type="project" value="UniProtKB-SubCell"/>
</dbReference>
<dbReference type="GO" id="GO:0019901">
    <property type="term" value="F:protein kinase binding"/>
    <property type="evidence" value="ECO:0000266"/>
    <property type="project" value="RGD"/>
</dbReference>
<dbReference type="GO" id="GO:0030291">
    <property type="term" value="F:protein serine/threonine kinase inhibitor activity"/>
    <property type="evidence" value="ECO:0000266"/>
    <property type="project" value="RGD"/>
</dbReference>
<dbReference type="GO" id="GO:0005173">
    <property type="term" value="F:stem cell factor receptor binding"/>
    <property type="evidence" value="ECO:0000266"/>
    <property type="project" value="RGD"/>
</dbReference>
<dbReference type="GO" id="GO:0010719">
    <property type="term" value="P:negative regulation of epithelial to mesenchymal transition"/>
    <property type="evidence" value="ECO:0000250"/>
    <property type="project" value="UniProtKB"/>
</dbReference>
<dbReference type="GO" id="GO:0070373">
    <property type="term" value="P:negative regulation of ERK1 and ERK2 cascade"/>
    <property type="evidence" value="ECO:0000250"/>
    <property type="project" value="UniProtKB"/>
</dbReference>
<dbReference type="GO" id="GO:1902532">
    <property type="term" value="P:negative regulation of intracellular signal transduction"/>
    <property type="evidence" value="ECO:0000266"/>
    <property type="project" value="RGD"/>
</dbReference>
<dbReference type="GO" id="GO:1902747">
    <property type="term" value="P:negative regulation of lens fiber cell differentiation"/>
    <property type="evidence" value="ECO:0000250"/>
    <property type="project" value="UniProtKB"/>
</dbReference>
<dbReference type="GO" id="GO:0043409">
    <property type="term" value="P:negative regulation of MAPK cascade"/>
    <property type="evidence" value="ECO:0000266"/>
    <property type="project" value="RGD"/>
</dbReference>
<dbReference type="GO" id="GO:0030512">
    <property type="term" value="P:negative regulation of transforming growth factor beta receptor signaling pathway"/>
    <property type="evidence" value="ECO:0000250"/>
    <property type="project" value="UniProtKB"/>
</dbReference>
<dbReference type="GO" id="GO:0043517">
    <property type="term" value="P:positive regulation of DNA damage response, signal transduction by p53 class mediator"/>
    <property type="evidence" value="ECO:0000266"/>
    <property type="project" value="RGD"/>
</dbReference>
<dbReference type="CDD" id="cd10574">
    <property type="entry name" value="EVH1_SPRED-like"/>
    <property type="match status" value="1"/>
</dbReference>
<dbReference type="FunFam" id="2.30.29.30:FF:000052">
    <property type="entry name" value="Sprouty-related, EVH1 domain containing 2"/>
    <property type="match status" value="1"/>
</dbReference>
<dbReference type="Gene3D" id="2.30.29.30">
    <property type="entry name" value="Pleckstrin-homology domain (PH domain)/Phosphotyrosine-binding domain (PTB)"/>
    <property type="match status" value="1"/>
</dbReference>
<dbReference type="InterPro" id="IPR023337">
    <property type="entry name" value="KBD"/>
</dbReference>
<dbReference type="InterPro" id="IPR011993">
    <property type="entry name" value="PH-like_dom_sf"/>
</dbReference>
<dbReference type="InterPro" id="IPR041937">
    <property type="entry name" value="SPRE_EVH1"/>
</dbReference>
<dbReference type="InterPro" id="IPR007875">
    <property type="entry name" value="Sprouty"/>
</dbReference>
<dbReference type="InterPro" id="IPR000697">
    <property type="entry name" value="WH1/EVH1_dom"/>
</dbReference>
<dbReference type="PANTHER" id="PTHR11202:SF11">
    <property type="entry name" value="SPROUTY-RELATED, EVH1 DOMAIN-CONTAINING PROTEIN 2"/>
    <property type="match status" value="1"/>
</dbReference>
<dbReference type="PANTHER" id="PTHR11202">
    <property type="entry name" value="SPROUTY-RELATED, EVH1 DOMAIN-CONTAINING PROTEIN FAMILY MEMBER"/>
    <property type="match status" value="1"/>
</dbReference>
<dbReference type="Pfam" id="PF05210">
    <property type="entry name" value="Sprouty"/>
    <property type="match status" value="1"/>
</dbReference>
<dbReference type="Pfam" id="PF00568">
    <property type="entry name" value="WH1"/>
    <property type="match status" value="1"/>
</dbReference>
<dbReference type="SMART" id="SM00461">
    <property type="entry name" value="WH1"/>
    <property type="match status" value="1"/>
</dbReference>
<dbReference type="SUPFAM" id="SSF50729">
    <property type="entry name" value="PH domain-like"/>
    <property type="match status" value="1"/>
</dbReference>
<dbReference type="PROSITE" id="PS51488">
    <property type="entry name" value="KBD"/>
    <property type="match status" value="1"/>
</dbReference>
<dbReference type="PROSITE" id="PS51227">
    <property type="entry name" value="SPR"/>
    <property type="match status" value="1"/>
</dbReference>
<dbReference type="PROSITE" id="PS50229">
    <property type="entry name" value="WH1"/>
    <property type="match status" value="1"/>
</dbReference>
<keyword id="KW-1003">Cell membrane</keyword>
<keyword id="KW-0963">Cytoplasm</keyword>
<keyword id="KW-0968">Cytoplasmic vesicle</keyword>
<keyword id="KW-0472">Membrane</keyword>
<keyword id="KW-0597">Phosphoprotein</keyword>
<keyword id="KW-1185">Reference proteome</keyword>
<keyword id="KW-0832">Ubl conjugation</keyword>
<proteinExistence type="evidence at protein level"/>
<name>SPRE2_RAT</name>
<comment type="function">
    <text evidence="1 2">Negatively regulates Ras signaling pathways and downstream activation of MAP kinases. Recruits and translocates NF1 to the cell membrane, thereby enabling NF1-dependent hydrolysis of active GTP-bound Ras to inactive GDP-bound Ras (By similarity). Inhibits fibroblast growth factor (FGF)-induced retinal lens fiber differentiation, probably by inhibiting FGF-mediated phosphorylation of ERK1/2 (By similarity). Inhibits TGFB-induced epithelial-to-mesenchymal transition in lens epithelial cells (By similarity).</text>
</comment>
<comment type="subunit">
    <text evidence="1 2 7">Homodimer and heterodimer (By similarity). Able to interact with SPRED1 to form heterodimers (By similarity). Interacts with RAS (By similarity). May interact with ZDHHC13 (via ANK repeats) and ZDHHC17 (via ANK repeats) (By similarity). Interacts with TESK1 (PubMed:17974561). Interacts with NF1 (By similarity).</text>
</comment>
<comment type="subcellular location">
    <subcellularLocation>
        <location evidence="2">Cell membrane</location>
        <topology evidence="2">Peripheral membrane protein</topology>
        <orientation evidence="2">Cytoplasmic side</orientation>
    </subcellularLocation>
    <subcellularLocation>
        <location evidence="1">Cytoplasmic vesicle</location>
        <location evidence="1">Secretory vesicle membrane</location>
        <topology evidence="1">Peripheral membrane protein</topology>
        <orientation evidence="1">Cytoplasmic side</orientation>
    </subcellularLocation>
    <subcellularLocation>
        <location evidence="1">Cytoplasm</location>
    </subcellularLocation>
    <text evidence="1">Detected in the cytoplasm of the stratum spinosum cells, where it is associated with cytoplasmic vesicles that are supposed to be secretory granules.</text>
</comment>
<comment type="tissue specificity">
    <text evidence="8">Expressed in the eye, with higher expression in lens epithelium than in lens fiber cells at postnatal day 15.</text>
</comment>
<comment type="PTM">
    <text evidence="1">Phosphorylated on serine and threonine residues. Phosphorylated on tyrosine. Phosphorylation of Tyr-224 and Tyr-227 are required for ubiquitination.</text>
</comment>
<comment type="PTM">
    <text evidence="1">Ubiquitinated; leading to degradation by the proteasome.</text>
</comment>